<dbReference type="EMBL" id="BC123134">
    <property type="protein sequence ID" value="AAI23135.1"/>
    <property type="molecule type" value="mRNA"/>
</dbReference>
<dbReference type="RefSeq" id="NP_001090304.1">
    <property type="nucleotide sequence ID" value="NM_001096835.1"/>
</dbReference>
<dbReference type="DNASU" id="779213"/>
<dbReference type="GeneID" id="779213"/>
<dbReference type="KEGG" id="xla:779213"/>
<dbReference type="AGR" id="Xenbase:XB-GENE-941120"/>
<dbReference type="CTD" id="779213"/>
<dbReference type="Xenbase" id="XB-GENE-941120">
    <property type="gene designation" value="tmem208.L"/>
</dbReference>
<dbReference type="OMA" id="PIRAGWM"/>
<dbReference type="OrthoDB" id="10012212at2759"/>
<dbReference type="Proteomes" id="UP000186698">
    <property type="component" value="Chromosome 4L"/>
</dbReference>
<dbReference type="Bgee" id="779213">
    <property type="expression patterns" value="Expressed in neurula embryo and 19 other cell types or tissues"/>
</dbReference>
<dbReference type="GO" id="GO:0005789">
    <property type="term" value="C:endoplasmic reticulum membrane"/>
    <property type="evidence" value="ECO:0000250"/>
    <property type="project" value="UniProtKB"/>
</dbReference>
<dbReference type="GO" id="GO:0043231">
    <property type="term" value="C:intracellular membrane-bounded organelle"/>
    <property type="evidence" value="ECO:0000318"/>
    <property type="project" value="GO_Central"/>
</dbReference>
<dbReference type="GO" id="GO:0005773">
    <property type="term" value="C:vacuole"/>
    <property type="evidence" value="ECO:0007669"/>
    <property type="project" value="GOC"/>
</dbReference>
<dbReference type="GO" id="GO:0006914">
    <property type="term" value="P:autophagy"/>
    <property type="evidence" value="ECO:0007669"/>
    <property type="project" value="UniProtKB-KW"/>
</dbReference>
<dbReference type="GO" id="GO:0006624">
    <property type="term" value="P:vacuolar protein processing"/>
    <property type="evidence" value="ECO:0000318"/>
    <property type="project" value="GO_Central"/>
</dbReference>
<dbReference type="InterPro" id="IPR008506">
    <property type="entry name" value="SND2/TMEM208"/>
</dbReference>
<dbReference type="PANTHER" id="PTHR13505">
    <property type="entry name" value="TRANSMEMBRANE PROTEIN 208"/>
    <property type="match status" value="1"/>
</dbReference>
<dbReference type="PANTHER" id="PTHR13505:SF7">
    <property type="entry name" value="TRANSMEMBRANE PROTEIN 208"/>
    <property type="match status" value="1"/>
</dbReference>
<dbReference type="Pfam" id="PF05620">
    <property type="entry name" value="TMEM208_SND2"/>
    <property type="match status" value="1"/>
</dbReference>
<feature type="chain" id="PRO_0000325971" description="Transmembrane protein 208">
    <location>
        <begin position="1"/>
        <end position="174"/>
    </location>
</feature>
<feature type="transmembrane region" description="Helical" evidence="2">
    <location>
        <begin position="25"/>
        <end position="45"/>
    </location>
</feature>
<feature type="transmembrane region" description="Helical" evidence="2">
    <location>
        <begin position="51"/>
        <end position="68"/>
    </location>
</feature>
<feature type="transmembrane region" description="Helical" evidence="2">
    <location>
        <begin position="105"/>
        <end position="126"/>
    </location>
</feature>
<feature type="region of interest" description="Disordered" evidence="3">
    <location>
        <begin position="151"/>
        <end position="174"/>
    </location>
</feature>
<feature type="compositionally biased region" description="Basic residues" evidence="3">
    <location>
        <begin position="162"/>
        <end position="174"/>
    </location>
</feature>
<organism>
    <name type="scientific">Xenopus laevis</name>
    <name type="common">African clawed frog</name>
    <dbReference type="NCBI Taxonomy" id="8355"/>
    <lineage>
        <taxon>Eukaryota</taxon>
        <taxon>Metazoa</taxon>
        <taxon>Chordata</taxon>
        <taxon>Craniata</taxon>
        <taxon>Vertebrata</taxon>
        <taxon>Euteleostomi</taxon>
        <taxon>Amphibia</taxon>
        <taxon>Batrachia</taxon>
        <taxon>Anura</taxon>
        <taxon>Pipoidea</taxon>
        <taxon>Pipidae</taxon>
        <taxon>Xenopodinae</taxon>
        <taxon>Xenopus</taxon>
        <taxon>Xenopus</taxon>
    </lineage>
</organism>
<name>TM208_XENLA</name>
<protein>
    <recommendedName>
        <fullName>Transmembrane protein 208</fullName>
    </recommendedName>
</protein>
<reference key="1">
    <citation type="submission" date="2006-09" db="EMBL/GenBank/DDBJ databases">
        <authorList>
            <consortium name="NIH - Xenopus Gene Collection (XGC) project"/>
        </authorList>
    </citation>
    <scope>NUCLEOTIDE SEQUENCE [LARGE SCALE MRNA]</scope>
    <source>
        <tissue>Testis</tissue>
    </source>
</reference>
<keyword id="KW-0072">Autophagy</keyword>
<keyword id="KW-0256">Endoplasmic reticulum</keyword>
<keyword id="KW-0472">Membrane</keyword>
<keyword id="KW-1185">Reference proteome</keyword>
<keyword id="KW-0812">Transmembrane</keyword>
<keyword id="KW-1133">Transmembrane helix</keyword>
<proteinExistence type="evidence at transcript level"/>
<gene>
    <name type="primary">tmem208</name>
</gene>
<evidence type="ECO:0000250" key="1">
    <source>
        <dbReference type="UniProtKB" id="Q9BTX3"/>
    </source>
</evidence>
<evidence type="ECO:0000255" key="2"/>
<evidence type="ECO:0000256" key="3">
    <source>
        <dbReference type="SAM" id="MobiDB-lite"/>
    </source>
</evidence>
<evidence type="ECO:0000305" key="4"/>
<accession>Q0IHJ0</accession>
<comment type="function">
    <text evidence="1">May function as a negative regulator of endoplasmic reticulum-stress induced autophagy.</text>
</comment>
<comment type="subcellular location">
    <subcellularLocation>
        <location evidence="1">Endoplasmic reticulum membrane</location>
        <topology evidence="2">Multi-pass membrane protein</topology>
    </subcellularLocation>
</comment>
<comment type="similarity">
    <text evidence="4">Belongs to the TMEM208 family.</text>
</comment>
<sequence length="174" mass="19846">MAPKGKVGTKGKKQIYEENKETLSFYLRIILGATVLCGAINLGVFYSSSNFWTWATLVFSGIVYAGAYRSMRSMAQASFSEDGSLLDGGIDLNMEQGMAEHIKDIVLLTAIVQVLSCFSLYFWYFWLLAPGRALYLLWVNVLGPWFTADNSSTVPQEQNEKRQRRQERRQMKRF</sequence>